<gene>
    <name evidence="1" type="primary">rplF</name>
    <name type="ordered locus">Paes_2049</name>
</gene>
<reference key="1">
    <citation type="submission" date="2008-06" db="EMBL/GenBank/DDBJ databases">
        <title>Complete sequence of chromosome of Prosthecochloris aestuarii DSM 271.</title>
        <authorList>
            <consortium name="US DOE Joint Genome Institute"/>
            <person name="Lucas S."/>
            <person name="Copeland A."/>
            <person name="Lapidus A."/>
            <person name="Glavina del Rio T."/>
            <person name="Dalin E."/>
            <person name="Tice H."/>
            <person name="Bruce D."/>
            <person name="Goodwin L."/>
            <person name="Pitluck S."/>
            <person name="Schmutz J."/>
            <person name="Larimer F."/>
            <person name="Land M."/>
            <person name="Hauser L."/>
            <person name="Kyrpides N."/>
            <person name="Anderson I."/>
            <person name="Liu Z."/>
            <person name="Li T."/>
            <person name="Zhao F."/>
            <person name="Overmann J."/>
            <person name="Bryant D.A."/>
            <person name="Richardson P."/>
        </authorList>
    </citation>
    <scope>NUCLEOTIDE SEQUENCE [LARGE SCALE GENOMIC DNA]</scope>
    <source>
        <strain>DSM 271 / SK 413</strain>
    </source>
</reference>
<protein>
    <recommendedName>
        <fullName evidence="1">Large ribosomal subunit protein uL6</fullName>
    </recommendedName>
    <alternativeName>
        <fullName evidence="2">50S ribosomal protein L6</fullName>
    </alternativeName>
</protein>
<organism>
    <name type="scientific">Prosthecochloris aestuarii (strain DSM 271 / SK 413)</name>
    <dbReference type="NCBI Taxonomy" id="290512"/>
    <lineage>
        <taxon>Bacteria</taxon>
        <taxon>Pseudomonadati</taxon>
        <taxon>Chlorobiota</taxon>
        <taxon>Chlorobiia</taxon>
        <taxon>Chlorobiales</taxon>
        <taxon>Chlorobiaceae</taxon>
        <taxon>Prosthecochloris</taxon>
    </lineage>
</organism>
<name>RL6_PROA2</name>
<dbReference type="EMBL" id="CP001108">
    <property type="protein sequence ID" value="ACF47059.1"/>
    <property type="molecule type" value="Genomic_DNA"/>
</dbReference>
<dbReference type="RefSeq" id="WP_012506591.1">
    <property type="nucleotide sequence ID" value="NC_011059.1"/>
</dbReference>
<dbReference type="SMR" id="B4S5B3"/>
<dbReference type="STRING" id="290512.Paes_2049"/>
<dbReference type="KEGG" id="paa:Paes_2049"/>
<dbReference type="eggNOG" id="COG0097">
    <property type="taxonomic scope" value="Bacteria"/>
</dbReference>
<dbReference type="HOGENOM" id="CLU_065464_1_2_10"/>
<dbReference type="Proteomes" id="UP000002725">
    <property type="component" value="Chromosome"/>
</dbReference>
<dbReference type="GO" id="GO:0022625">
    <property type="term" value="C:cytosolic large ribosomal subunit"/>
    <property type="evidence" value="ECO:0007669"/>
    <property type="project" value="TreeGrafter"/>
</dbReference>
<dbReference type="GO" id="GO:0019843">
    <property type="term" value="F:rRNA binding"/>
    <property type="evidence" value="ECO:0007669"/>
    <property type="project" value="UniProtKB-UniRule"/>
</dbReference>
<dbReference type="GO" id="GO:0003735">
    <property type="term" value="F:structural constituent of ribosome"/>
    <property type="evidence" value="ECO:0007669"/>
    <property type="project" value="InterPro"/>
</dbReference>
<dbReference type="GO" id="GO:0002181">
    <property type="term" value="P:cytoplasmic translation"/>
    <property type="evidence" value="ECO:0007669"/>
    <property type="project" value="TreeGrafter"/>
</dbReference>
<dbReference type="FunFam" id="3.90.930.12:FF:000001">
    <property type="entry name" value="50S ribosomal protein L6"/>
    <property type="match status" value="1"/>
</dbReference>
<dbReference type="FunFam" id="3.90.930.12:FF:000002">
    <property type="entry name" value="50S ribosomal protein L6"/>
    <property type="match status" value="1"/>
</dbReference>
<dbReference type="Gene3D" id="3.90.930.12">
    <property type="entry name" value="Ribosomal protein L6, alpha-beta domain"/>
    <property type="match status" value="2"/>
</dbReference>
<dbReference type="HAMAP" id="MF_01365_B">
    <property type="entry name" value="Ribosomal_uL6_B"/>
    <property type="match status" value="1"/>
</dbReference>
<dbReference type="InterPro" id="IPR000702">
    <property type="entry name" value="Ribosomal_uL6-like"/>
</dbReference>
<dbReference type="InterPro" id="IPR036789">
    <property type="entry name" value="Ribosomal_uL6-like_a/b-dom_sf"/>
</dbReference>
<dbReference type="InterPro" id="IPR020040">
    <property type="entry name" value="Ribosomal_uL6_a/b-dom"/>
</dbReference>
<dbReference type="InterPro" id="IPR019906">
    <property type="entry name" value="Ribosomal_uL6_bac-type"/>
</dbReference>
<dbReference type="NCBIfam" id="TIGR03654">
    <property type="entry name" value="L6_bact"/>
    <property type="match status" value="1"/>
</dbReference>
<dbReference type="PANTHER" id="PTHR11655">
    <property type="entry name" value="60S/50S RIBOSOMAL PROTEIN L6/L9"/>
    <property type="match status" value="1"/>
</dbReference>
<dbReference type="PANTHER" id="PTHR11655:SF14">
    <property type="entry name" value="LARGE RIBOSOMAL SUBUNIT PROTEIN UL6M"/>
    <property type="match status" value="1"/>
</dbReference>
<dbReference type="Pfam" id="PF00347">
    <property type="entry name" value="Ribosomal_L6"/>
    <property type="match status" value="2"/>
</dbReference>
<dbReference type="PIRSF" id="PIRSF002162">
    <property type="entry name" value="Ribosomal_L6"/>
    <property type="match status" value="1"/>
</dbReference>
<dbReference type="PRINTS" id="PR00059">
    <property type="entry name" value="RIBOSOMALL6"/>
</dbReference>
<dbReference type="SUPFAM" id="SSF56053">
    <property type="entry name" value="Ribosomal protein L6"/>
    <property type="match status" value="2"/>
</dbReference>
<accession>B4S5B3</accession>
<feature type="chain" id="PRO_1000144029" description="Large ribosomal subunit protein uL6">
    <location>
        <begin position="1"/>
        <end position="180"/>
    </location>
</feature>
<evidence type="ECO:0000255" key="1">
    <source>
        <dbReference type="HAMAP-Rule" id="MF_01365"/>
    </source>
</evidence>
<evidence type="ECO:0000305" key="2"/>
<comment type="function">
    <text evidence="1">This protein binds to the 23S rRNA, and is important in its secondary structure. It is located near the subunit interface in the base of the L7/L12 stalk, and near the tRNA binding site of the peptidyltransferase center.</text>
</comment>
<comment type="subunit">
    <text evidence="1">Part of the 50S ribosomal subunit.</text>
</comment>
<comment type="similarity">
    <text evidence="1">Belongs to the universal ribosomal protein uL6 family.</text>
</comment>
<sequence length="180" mass="19747">MSRIGKMPVQLADQAKIEIKDNVITVSGPKGTLQQQLVPEVSVDIADGQITVTRADDTKRSRAMHGLYRMLVSNMVDGVTKGFTRKLLISGVGFRAEMKSDLLALTLGYSHQIYFKAPEEVTIACPDPTTIEISGIDKALVGQVAAKIRSFRKPEPYRGKGIKFSDEVVRRKEGKTAGKK</sequence>
<proteinExistence type="inferred from homology"/>
<keyword id="KW-0687">Ribonucleoprotein</keyword>
<keyword id="KW-0689">Ribosomal protein</keyword>
<keyword id="KW-0694">RNA-binding</keyword>
<keyword id="KW-0699">rRNA-binding</keyword>